<feature type="chain" id="PRO_0000340144" description="Sugar fermentation stimulation protein homolog">
    <location>
        <begin position="1"/>
        <end position="239"/>
    </location>
</feature>
<comment type="similarity">
    <text evidence="1">Belongs to the SfsA family.</text>
</comment>
<organism>
    <name type="scientific">Methylobacterium sp. (strain 4-46)</name>
    <dbReference type="NCBI Taxonomy" id="426117"/>
    <lineage>
        <taxon>Bacteria</taxon>
        <taxon>Pseudomonadati</taxon>
        <taxon>Pseudomonadota</taxon>
        <taxon>Alphaproteobacteria</taxon>
        <taxon>Hyphomicrobiales</taxon>
        <taxon>Methylobacteriaceae</taxon>
        <taxon>Methylobacterium</taxon>
    </lineage>
</organism>
<evidence type="ECO:0000255" key="1">
    <source>
        <dbReference type="HAMAP-Rule" id="MF_00095"/>
    </source>
</evidence>
<name>SFSA_METS4</name>
<reference key="1">
    <citation type="submission" date="2008-02" db="EMBL/GenBank/DDBJ databases">
        <title>Complete sequence of chromosome of Methylobacterium sp. 4-46.</title>
        <authorList>
            <consortium name="US DOE Joint Genome Institute"/>
            <person name="Copeland A."/>
            <person name="Lucas S."/>
            <person name="Lapidus A."/>
            <person name="Glavina del Rio T."/>
            <person name="Dalin E."/>
            <person name="Tice H."/>
            <person name="Bruce D."/>
            <person name="Goodwin L."/>
            <person name="Pitluck S."/>
            <person name="Chertkov O."/>
            <person name="Brettin T."/>
            <person name="Detter J.C."/>
            <person name="Han C."/>
            <person name="Kuske C.R."/>
            <person name="Schmutz J."/>
            <person name="Larimer F."/>
            <person name="Land M."/>
            <person name="Hauser L."/>
            <person name="Kyrpides N."/>
            <person name="Ivanova N."/>
            <person name="Marx C.J."/>
            <person name="Richardson P."/>
        </authorList>
    </citation>
    <scope>NUCLEOTIDE SEQUENCE [LARGE SCALE GENOMIC DNA]</scope>
    <source>
        <strain>4-46</strain>
    </source>
</reference>
<protein>
    <recommendedName>
        <fullName evidence="1">Sugar fermentation stimulation protein homolog</fullName>
    </recommendedName>
</protein>
<proteinExistence type="inferred from homology"/>
<sequence length="239" mass="25851">MPALRFPSRLTEGRLVRRYKRFLADVELADGRLVTAHCANPGAMLGLAAPGRPVLLSAATSPGRKLAWSWEMVEADLPGGPQWVGINTMRPNHLVAEAFREGRLPALAGVTSLRPEVRYGRASRVDFLAEHPAGPIHVEVKNCHMMRDAGLAEFPDCIAARSARHMEELAAVVRGGGRAMVIVVVQMRAGRFTVAGDVDPAFAASFRRAQEAGVATVAYRCRLDPDEVAIEAEIPMLPA</sequence>
<gene>
    <name evidence="1" type="primary">sfsA</name>
    <name type="ordered locus">M446_6951</name>
</gene>
<accession>B0ULY8</accession>
<dbReference type="EMBL" id="CP000943">
    <property type="protein sequence ID" value="ACA21185.1"/>
    <property type="molecule type" value="Genomic_DNA"/>
</dbReference>
<dbReference type="SMR" id="B0ULY8"/>
<dbReference type="STRING" id="426117.M446_6951"/>
<dbReference type="KEGG" id="met:M446_6951"/>
<dbReference type="eggNOG" id="COG1489">
    <property type="taxonomic scope" value="Bacteria"/>
</dbReference>
<dbReference type="HOGENOM" id="CLU_052299_2_0_5"/>
<dbReference type="GO" id="GO:0003677">
    <property type="term" value="F:DNA binding"/>
    <property type="evidence" value="ECO:0007669"/>
    <property type="project" value="InterPro"/>
</dbReference>
<dbReference type="CDD" id="cd22359">
    <property type="entry name" value="SfsA-like_bacterial"/>
    <property type="match status" value="1"/>
</dbReference>
<dbReference type="Gene3D" id="2.40.50.580">
    <property type="match status" value="1"/>
</dbReference>
<dbReference type="Gene3D" id="3.40.1350.60">
    <property type="match status" value="1"/>
</dbReference>
<dbReference type="HAMAP" id="MF_00095">
    <property type="entry name" value="SfsA"/>
    <property type="match status" value="1"/>
</dbReference>
<dbReference type="InterPro" id="IPR005224">
    <property type="entry name" value="SfsA"/>
</dbReference>
<dbReference type="InterPro" id="IPR040452">
    <property type="entry name" value="SfsA_C"/>
</dbReference>
<dbReference type="InterPro" id="IPR041465">
    <property type="entry name" value="SfsA_N"/>
</dbReference>
<dbReference type="NCBIfam" id="TIGR00230">
    <property type="entry name" value="sfsA"/>
    <property type="match status" value="1"/>
</dbReference>
<dbReference type="PANTHER" id="PTHR30545">
    <property type="entry name" value="SUGAR FERMENTATION STIMULATION PROTEIN A"/>
    <property type="match status" value="1"/>
</dbReference>
<dbReference type="PANTHER" id="PTHR30545:SF2">
    <property type="entry name" value="SUGAR FERMENTATION STIMULATION PROTEIN A"/>
    <property type="match status" value="1"/>
</dbReference>
<dbReference type="Pfam" id="PF03749">
    <property type="entry name" value="SfsA"/>
    <property type="match status" value="1"/>
</dbReference>
<dbReference type="Pfam" id="PF17746">
    <property type="entry name" value="SfsA_N"/>
    <property type="match status" value="1"/>
</dbReference>